<evidence type="ECO:0000255" key="1">
    <source>
        <dbReference type="HAMAP-Rule" id="MF_00195"/>
    </source>
</evidence>
<feature type="chain" id="PRO_1000099185" description="GTPase Der">
    <location>
        <begin position="1"/>
        <end position="495"/>
    </location>
</feature>
<feature type="domain" description="EngA-type G 1">
    <location>
        <begin position="3"/>
        <end position="166"/>
    </location>
</feature>
<feature type="domain" description="EngA-type G 2">
    <location>
        <begin position="208"/>
        <end position="381"/>
    </location>
</feature>
<feature type="domain" description="KH-like" evidence="1">
    <location>
        <begin position="382"/>
        <end position="466"/>
    </location>
</feature>
<feature type="binding site" evidence="1">
    <location>
        <begin position="9"/>
        <end position="16"/>
    </location>
    <ligand>
        <name>GTP</name>
        <dbReference type="ChEBI" id="CHEBI:37565"/>
        <label>1</label>
    </ligand>
</feature>
<feature type="binding site" evidence="1">
    <location>
        <begin position="56"/>
        <end position="60"/>
    </location>
    <ligand>
        <name>GTP</name>
        <dbReference type="ChEBI" id="CHEBI:37565"/>
        <label>1</label>
    </ligand>
</feature>
<feature type="binding site" evidence="1">
    <location>
        <begin position="118"/>
        <end position="121"/>
    </location>
    <ligand>
        <name>GTP</name>
        <dbReference type="ChEBI" id="CHEBI:37565"/>
        <label>1</label>
    </ligand>
</feature>
<feature type="binding site" evidence="1">
    <location>
        <begin position="214"/>
        <end position="221"/>
    </location>
    <ligand>
        <name>GTP</name>
        <dbReference type="ChEBI" id="CHEBI:37565"/>
        <label>2</label>
    </ligand>
</feature>
<feature type="binding site" evidence="1">
    <location>
        <begin position="261"/>
        <end position="265"/>
    </location>
    <ligand>
        <name>GTP</name>
        <dbReference type="ChEBI" id="CHEBI:37565"/>
        <label>2</label>
    </ligand>
</feature>
<feature type="binding site" evidence="1">
    <location>
        <begin position="326"/>
        <end position="329"/>
    </location>
    <ligand>
        <name>GTP</name>
        <dbReference type="ChEBI" id="CHEBI:37565"/>
        <label>2</label>
    </ligand>
</feature>
<sequence>MIPVIALVGRPNVGKSTLFNRLTHTRDALVADFPGLTRDRKYGRAEVEGHEFIVVDTGGIDGTEDGVETKMAGQSLLAIEEADIVLFMVDARAGLMPADQGIAQHLRSREKATFLVANKTDGIDPDTATADFYSLGLGEVHAIAASHGRGVTQLIEDVMAPYMDAEEPEVELTEEEENAAYWAEQEAQGEDVPPEDPEDDFDPRTLPIKLAIVGRPNVGKSTLTNRILGEDRVVVYDMPGTTRDSIYIPMTRDDREYILIDTAGVRKRGKITETVEKFSVIKTLQAIEDSNVVLLVIDARDGISDQDLSLLGFILNSGRSLVIAVNKWDGMTEEARAQVKDMLDLRLGFVDFARIHFISALHGSGVGNLFESVQEAYDCSTKRVGTSLLTRIMQMAEEDHQPPLVRGRRVKLKYAHAGGYNPPIVVIHGNQVTDLSDSYKRYLMNYFRRSLKVMGTPIRIQFKEGENPFAGKRNPLTPNQMRKRKRLMSHLKKGK</sequence>
<dbReference type="EMBL" id="CP000950">
    <property type="protein sequence ID" value="ACA67595.1"/>
    <property type="molecule type" value="Genomic_DNA"/>
</dbReference>
<dbReference type="RefSeq" id="WP_002209813.1">
    <property type="nucleotide sequence ID" value="NZ_CP009792.1"/>
</dbReference>
<dbReference type="SMR" id="B1JSA4"/>
<dbReference type="GeneID" id="57975832"/>
<dbReference type="KEGG" id="ypy:YPK_1297"/>
<dbReference type="PATRIC" id="fig|502800.11.peg.1932"/>
<dbReference type="GO" id="GO:0005525">
    <property type="term" value="F:GTP binding"/>
    <property type="evidence" value="ECO:0007669"/>
    <property type="project" value="UniProtKB-UniRule"/>
</dbReference>
<dbReference type="GO" id="GO:0043022">
    <property type="term" value="F:ribosome binding"/>
    <property type="evidence" value="ECO:0007669"/>
    <property type="project" value="TreeGrafter"/>
</dbReference>
<dbReference type="GO" id="GO:0042254">
    <property type="term" value="P:ribosome biogenesis"/>
    <property type="evidence" value="ECO:0007669"/>
    <property type="project" value="UniProtKB-KW"/>
</dbReference>
<dbReference type="CDD" id="cd01894">
    <property type="entry name" value="EngA1"/>
    <property type="match status" value="1"/>
</dbReference>
<dbReference type="CDD" id="cd01895">
    <property type="entry name" value="EngA2"/>
    <property type="match status" value="1"/>
</dbReference>
<dbReference type="FunFam" id="3.30.300.20:FF:000004">
    <property type="entry name" value="GTPase Der"/>
    <property type="match status" value="1"/>
</dbReference>
<dbReference type="FunFam" id="3.40.50.300:FF:000040">
    <property type="entry name" value="GTPase Der"/>
    <property type="match status" value="1"/>
</dbReference>
<dbReference type="FunFam" id="3.40.50.300:FF:000057">
    <property type="entry name" value="GTPase Der"/>
    <property type="match status" value="1"/>
</dbReference>
<dbReference type="Gene3D" id="3.30.300.20">
    <property type="match status" value="1"/>
</dbReference>
<dbReference type="Gene3D" id="3.40.50.300">
    <property type="entry name" value="P-loop containing nucleotide triphosphate hydrolases"/>
    <property type="match status" value="2"/>
</dbReference>
<dbReference type="HAMAP" id="MF_00195">
    <property type="entry name" value="GTPase_Der"/>
    <property type="match status" value="1"/>
</dbReference>
<dbReference type="InterPro" id="IPR031166">
    <property type="entry name" value="G_ENGA"/>
</dbReference>
<dbReference type="InterPro" id="IPR006073">
    <property type="entry name" value="GTP-bd"/>
</dbReference>
<dbReference type="InterPro" id="IPR016484">
    <property type="entry name" value="GTPase_Der"/>
</dbReference>
<dbReference type="InterPro" id="IPR032859">
    <property type="entry name" value="KH_dom-like"/>
</dbReference>
<dbReference type="InterPro" id="IPR015946">
    <property type="entry name" value="KH_dom-like_a/b"/>
</dbReference>
<dbReference type="InterPro" id="IPR027417">
    <property type="entry name" value="P-loop_NTPase"/>
</dbReference>
<dbReference type="InterPro" id="IPR005225">
    <property type="entry name" value="Small_GTP-bd"/>
</dbReference>
<dbReference type="NCBIfam" id="TIGR03594">
    <property type="entry name" value="GTPase_EngA"/>
    <property type="match status" value="1"/>
</dbReference>
<dbReference type="NCBIfam" id="TIGR00231">
    <property type="entry name" value="small_GTP"/>
    <property type="match status" value="2"/>
</dbReference>
<dbReference type="PANTHER" id="PTHR43834">
    <property type="entry name" value="GTPASE DER"/>
    <property type="match status" value="1"/>
</dbReference>
<dbReference type="PANTHER" id="PTHR43834:SF6">
    <property type="entry name" value="GTPASE DER"/>
    <property type="match status" value="1"/>
</dbReference>
<dbReference type="Pfam" id="PF14714">
    <property type="entry name" value="KH_dom-like"/>
    <property type="match status" value="1"/>
</dbReference>
<dbReference type="Pfam" id="PF01926">
    <property type="entry name" value="MMR_HSR1"/>
    <property type="match status" value="2"/>
</dbReference>
<dbReference type="PIRSF" id="PIRSF006485">
    <property type="entry name" value="GTP-binding_EngA"/>
    <property type="match status" value="1"/>
</dbReference>
<dbReference type="PRINTS" id="PR00326">
    <property type="entry name" value="GTP1OBG"/>
</dbReference>
<dbReference type="SUPFAM" id="SSF52540">
    <property type="entry name" value="P-loop containing nucleoside triphosphate hydrolases"/>
    <property type="match status" value="2"/>
</dbReference>
<dbReference type="PROSITE" id="PS51712">
    <property type="entry name" value="G_ENGA"/>
    <property type="match status" value="2"/>
</dbReference>
<name>DER_YERPY</name>
<reference key="1">
    <citation type="submission" date="2008-02" db="EMBL/GenBank/DDBJ databases">
        <title>Complete sequence of Yersinia pseudotuberculosis YPIII.</title>
        <authorList>
            <consortium name="US DOE Joint Genome Institute"/>
            <person name="Copeland A."/>
            <person name="Lucas S."/>
            <person name="Lapidus A."/>
            <person name="Glavina del Rio T."/>
            <person name="Dalin E."/>
            <person name="Tice H."/>
            <person name="Bruce D."/>
            <person name="Goodwin L."/>
            <person name="Pitluck S."/>
            <person name="Munk A.C."/>
            <person name="Brettin T."/>
            <person name="Detter J.C."/>
            <person name="Han C."/>
            <person name="Tapia R."/>
            <person name="Schmutz J."/>
            <person name="Larimer F."/>
            <person name="Land M."/>
            <person name="Hauser L."/>
            <person name="Challacombe J.F."/>
            <person name="Green L."/>
            <person name="Lindler L.E."/>
            <person name="Nikolich M.P."/>
            <person name="Richardson P."/>
        </authorList>
    </citation>
    <scope>NUCLEOTIDE SEQUENCE [LARGE SCALE GENOMIC DNA]</scope>
    <source>
        <strain>YPIII</strain>
    </source>
</reference>
<keyword id="KW-0342">GTP-binding</keyword>
<keyword id="KW-0547">Nucleotide-binding</keyword>
<keyword id="KW-0677">Repeat</keyword>
<keyword id="KW-0690">Ribosome biogenesis</keyword>
<comment type="function">
    <text evidence="1">GTPase that plays an essential role in the late steps of ribosome biogenesis.</text>
</comment>
<comment type="subunit">
    <text evidence="1">Associates with the 50S ribosomal subunit.</text>
</comment>
<comment type="similarity">
    <text evidence="1">Belongs to the TRAFAC class TrmE-Era-EngA-EngB-Septin-like GTPase superfamily. EngA (Der) GTPase family.</text>
</comment>
<protein>
    <recommendedName>
        <fullName evidence="1">GTPase Der</fullName>
    </recommendedName>
    <alternativeName>
        <fullName evidence="1">GTP-binding protein EngA</fullName>
    </alternativeName>
</protein>
<accession>B1JSA4</accession>
<organism>
    <name type="scientific">Yersinia pseudotuberculosis serotype O:3 (strain YPIII)</name>
    <dbReference type="NCBI Taxonomy" id="502800"/>
    <lineage>
        <taxon>Bacteria</taxon>
        <taxon>Pseudomonadati</taxon>
        <taxon>Pseudomonadota</taxon>
        <taxon>Gammaproteobacteria</taxon>
        <taxon>Enterobacterales</taxon>
        <taxon>Yersiniaceae</taxon>
        <taxon>Yersinia</taxon>
    </lineage>
</organism>
<gene>
    <name evidence="1" type="primary">der</name>
    <name type="synonym">engA</name>
    <name type="ordered locus">YPK_1297</name>
</gene>
<proteinExistence type="inferred from homology"/>